<dbReference type="EMBL" id="AF190644">
    <property type="protein sequence ID" value="AAK16238.1"/>
    <property type="molecule type" value="mRNA"/>
</dbReference>
<dbReference type="EMBL" id="AK002596">
    <property type="protein sequence ID" value="BAB22217.1"/>
    <property type="molecule type" value="mRNA"/>
</dbReference>
<dbReference type="EMBL" id="AK049819">
    <property type="protein sequence ID" value="BAC33933.1"/>
    <property type="molecule type" value="mRNA"/>
</dbReference>
<dbReference type="EMBL" id="BC026798">
    <property type="protein sequence ID" value="AAH26798.1"/>
    <property type="molecule type" value="mRNA"/>
</dbReference>
<dbReference type="EMBL" id="BC081436">
    <property type="protein sequence ID" value="AAH81436.1"/>
    <property type="molecule type" value="mRNA"/>
</dbReference>
<dbReference type="CCDS" id="CCDS40480.1"/>
<dbReference type="RefSeq" id="NP_080969.2">
    <property type="nucleotide sequence ID" value="NM_026693.5"/>
</dbReference>
<dbReference type="SMR" id="P60521"/>
<dbReference type="BioGRID" id="220282">
    <property type="interactions" value="25"/>
</dbReference>
<dbReference type="ELM" id="P60521"/>
<dbReference type="FunCoup" id="P60521">
    <property type="interactions" value="2398"/>
</dbReference>
<dbReference type="STRING" id="10090.ENSMUSP00000034428"/>
<dbReference type="iPTMnet" id="P60521"/>
<dbReference type="PhosphoSitePlus" id="P60521"/>
<dbReference type="SwissPalm" id="P60521"/>
<dbReference type="jPOST" id="P60521"/>
<dbReference type="PaxDb" id="10090-ENSMUSP00000034428"/>
<dbReference type="PeptideAtlas" id="P60521"/>
<dbReference type="ProteomicsDB" id="268853"/>
<dbReference type="Pumba" id="P60521"/>
<dbReference type="Antibodypedia" id="30328">
    <property type="antibodies" value="563 antibodies from 35 providers"/>
</dbReference>
<dbReference type="DNASU" id="93739"/>
<dbReference type="Ensembl" id="ENSMUST00000034428.8">
    <property type="protein sequence ID" value="ENSMUSP00000034428.8"/>
    <property type="gene ID" value="ENSMUSG00000031950.8"/>
</dbReference>
<dbReference type="GeneID" id="93739"/>
<dbReference type="KEGG" id="mmu:93739"/>
<dbReference type="UCSC" id="uc009nnb.2">
    <property type="organism name" value="mouse"/>
</dbReference>
<dbReference type="AGR" id="MGI:1890602"/>
<dbReference type="CTD" id="11345"/>
<dbReference type="MGI" id="MGI:1890602">
    <property type="gene designation" value="Gabarapl2"/>
</dbReference>
<dbReference type="VEuPathDB" id="HostDB:ENSMUSG00000031950"/>
<dbReference type="eggNOG" id="KOG1654">
    <property type="taxonomic scope" value="Eukaryota"/>
</dbReference>
<dbReference type="GeneTree" id="ENSGT00940000155010"/>
<dbReference type="HOGENOM" id="CLU_119276_0_1_1"/>
<dbReference type="InParanoid" id="P60521"/>
<dbReference type="OMA" id="AKMKWMF"/>
<dbReference type="OrthoDB" id="6738456at2759"/>
<dbReference type="PhylomeDB" id="P60521"/>
<dbReference type="TreeFam" id="TF312964"/>
<dbReference type="Reactome" id="R-MMU-1632852">
    <property type="pathway name" value="Macroautophagy"/>
</dbReference>
<dbReference type="Reactome" id="R-MMU-8854214">
    <property type="pathway name" value="TBC/RABGAPs"/>
</dbReference>
<dbReference type="BioGRID-ORCS" id="93739">
    <property type="hits" value="9 hits in 76 CRISPR screens"/>
</dbReference>
<dbReference type="CD-CODE" id="CE726F99">
    <property type="entry name" value="Postsynaptic density"/>
</dbReference>
<dbReference type="ChiTaRS" id="Gabarapl2">
    <property type="organism name" value="mouse"/>
</dbReference>
<dbReference type="PRO" id="PR:P60521"/>
<dbReference type="Proteomes" id="UP000000589">
    <property type="component" value="Chromosome 8"/>
</dbReference>
<dbReference type="RNAct" id="P60521">
    <property type="molecule type" value="protein"/>
</dbReference>
<dbReference type="Bgee" id="ENSMUSG00000031950">
    <property type="expression patterns" value="Expressed in embryonic cell in blastocyst and 64 other cell types or tissues"/>
</dbReference>
<dbReference type="GO" id="GO:0005776">
    <property type="term" value="C:autophagosome"/>
    <property type="evidence" value="ECO:0000250"/>
    <property type="project" value="UniProtKB"/>
</dbReference>
<dbReference type="GO" id="GO:0000421">
    <property type="term" value="C:autophagosome membrane"/>
    <property type="evidence" value="ECO:0007669"/>
    <property type="project" value="Ensembl"/>
</dbReference>
<dbReference type="GO" id="GO:0031410">
    <property type="term" value="C:cytoplasmic vesicle"/>
    <property type="evidence" value="ECO:0007669"/>
    <property type="project" value="UniProtKB-KW"/>
</dbReference>
<dbReference type="GO" id="GO:0005789">
    <property type="term" value="C:endoplasmic reticulum membrane"/>
    <property type="evidence" value="ECO:0007669"/>
    <property type="project" value="UniProtKB-SubCell"/>
</dbReference>
<dbReference type="GO" id="GO:0005794">
    <property type="term" value="C:Golgi apparatus"/>
    <property type="evidence" value="ECO:0000314"/>
    <property type="project" value="MGI"/>
</dbReference>
<dbReference type="GO" id="GO:0000139">
    <property type="term" value="C:Golgi membrane"/>
    <property type="evidence" value="ECO:0000314"/>
    <property type="project" value="MGI"/>
</dbReference>
<dbReference type="GO" id="GO:0008429">
    <property type="term" value="F:phosphatidylethanolamine binding"/>
    <property type="evidence" value="ECO:0007669"/>
    <property type="project" value="Ensembl"/>
</dbReference>
<dbReference type="GO" id="GO:0031625">
    <property type="term" value="F:ubiquitin protein ligase binding"/>
    <property type="evidence" value="ECO:0007669"/>
    <property type="project" value="Ensembl"/>
</dbReference>
<dbReference type="GO" id="GO:0006914">
    <property type="term" value="P:autophagy"/>
    <property type="evidence" value="ECO:0007669"/>
    <property type="project" value="UniProtKB-KW"/>
</dbReference>
<dbReference type="GO" id="GO:0006891">
    <property type="term" value="P:intra-Golgi vesicle-mediated transport"/>
    <property type="evidence" value="ECO:0000266"/>
    <property type="project" value="MGI"/>
</dbReference>
<dbReference type="GO" id="GO:1901799">
    <property type="term" value="P:negative regulation of proteasomal protein catabolic process"/>
    <property type="evidence" value="ECO:0007669"/>
    <property type="project" value="Ensembl"/>
</dbReference>
<dbReference type="GO" id="GO:0070972">
    <property type="term" value="P:protein localization to endoplasmic reticulum"/>
    <property type="evidence" value="ECO:0000250"/>
    <property type="project" value="UniProtKB"/>
</dbReference>
<dbReference type="GO" id="GO:0015031">
    <property type="term" value="P:protein transport"/>
    <property type="evidence" value="ECO:0007669"/>
    <property type="project" value="UniProtKB-KW"/>
</dbReference>
<dbReference type="CDD" id="cd17163">
    <property type="entry name" value="Ubl_ATG8_GABARAPL2"/>
    <property type="match status" value="1"/>
</dbReference>
<dbReference type="FunFam" id="3.10.20.90:FF:000077">
    <property type="entry name" value="gamma-aminobutyric acid receptor-associated protein-like 2"/>
    <property type="match status" value="1"/>
</dbReference>
<dbReference type="Gene3D" id="3.10.20.90">
    <property type="entry name" value="Phosphatidylinositol 3-kinase Catalytic Subunit, Chain A, domain 1"/>
    <property type="match status" value="1"/>
</dbReference>
<dbReference type="InterPro" id="IPR004241">
    <property type="entry name" value="Atg8-like"/>
</dbReference>
<dbReference type="InterPro" id="IPR029071">
    <property type="entry name" value="Ubiquitin-like_domsf"/>
</dbReference>
<dbReference type="PANTHER" id="PTHR10969">
    <property type="entry name" value="MICROTUBULE-ASSOCIATED PROTEINS 1A/1B LIGHT CHAIN 3-RELATED"/>
    <property type="match status" value="1"/>
</dbReference>
<dbReference type="Pfam" id="PF02991">
    <property type="entry name" value="ATG8"/>
    <property type="match status" value="1"/>
</dbReference>
<dbReference type="SUPFAM" id="SSF54236">
    <property type="entry name" value="Ubiquitin-like"/>
    <property type="match status" value="1"/>
</dbReference>
<evidence type="ECO:0000250" key="1">
    <source>
        <dbReference type="UniProtKB" id="P60519"/>
    </source>
</evidence>
<evidence type="ECO:0000250" key="2">
    <source>
        <dbReference type="UniProtKB" id="P60520"/>
    </source>
</evidence>
<evidence type="ECO:0000269" key="3">
    <source>
    </source>
</evidence>
<evidence type="ECO:0000269" key="4">
    <source>
    </source>
</evidence>
<evidence type="ECO:0000269" key="5">
    <source>
    </source>
</evidence>
<evidence type="ECO:0000269" key="6">
    <source>
    </source>
</evidence>
<evidence type="ECO:0000269" key="7">
    <source>
    </source>
</evidence>
<evidence type="ECO:0000269" key="8">
    <source>
    </source>
</evidence>
<evidence type="ECO:0000269" key="9">
    <source>
    </source>
</evidence>
<evidence type="ECO:0000305" key="10"/>
<evidence type="ECO:0000312" key="11">
    <source>
        <dbReference type="MGI" id="MGI:1890602"/>
    </source>
</evidence>
<accession>P60521</accession>
<accession>O08765</accession>
<accession>Q9DCP8</accession>
<accession>Q9UQF7</accession>
<reference key="1">
    <citation type="journal article" date="2001" name="Genomics">
        <title>Cloning, expression patterns, and chromosome localization of three human and two mouse homologues of GABA(A) receptor-associated protein.</title>
        <authorList>
            <person name="Xin Y."/>
            <person name="Yu L."/>
            <person name="Chen Z."/>
            <person name="Zheng L."/>
            <person name="Fu Q."/>
            <person name="Jiang J."/>
            <person name="Zhang P."/>
            <person name="Gong R."/>
            <person name="Zhao S."/>
        </authorList>
    </citation>
    <scope>NUCLEOTIDE SEQUENCE [MRNA]</scope>
    <scope>TISSUE SPECIFICITY</scope>
</reference>
<reference key="2">
    <citation type="journal article" date="2005" name="Science">
        <title>The transcriptional landscape of the mammalian genome.</title>
        <authorList>
            <person name="Carninci P."/>
            <person name="Kasukawa T."/>
            <person name="Katayama S."/>
            <person name="Gough J."/>
            <person name="Frith M.C."/>
            <person name="Maeda N."/>
            <person name="Oyama R."/>
            <person name="Ravasi T."/>
            <person name="Lenhard B."/>
            <person name="Wells C."/>
            <person name="Kodzius R."/>
            <person name="Shimokawa K."/>
            <person name="Bajic V.B."/>
            <person name="Brenner S.E."/>
            <person name="Batalov S."/>
            <person name="Forrest A.R."/>
            <person name="Zavolan M."/>
            <person name="Davis M.J."/>
            <person name="Wilming L.G."/>
            <person name="Aidinis V."/>
            <person name="Allen J.E."/>
            <person name="Ambesi-Impiombato A."/>
            <person name="Apweiler R."/>
            <person name="Aturaliya R.N."/>
            <person name="Bailey T.L."/>
            <person name="Bansal M."/>
            <person name="Baxter L."/>
            <person name="Beisel K.W."/>
            <person name="Bersano T."/>
            <person name="Bono H."/>
            <person name="Chalk A.M."/>
            <person name="Chiu K.P."/>
            <person name="Choudhary V."/>
            <person name="Christoffels A."/>
            <person name="Clutterbuck D.R."/>
            <person name="Crowe M.L."/>
            <person name="Dalla E."/>
            <person name="Dalrymple B.P."/>
            <person name="de Bono B."/>
            <person name="Della Gatta G."/>
            <person name="di Bernardo D."/>
            <person name="Down T."/>
            <person name="Engstrom P."/>
            <person name="Fagiolini M."/>
            <person name="Faulkner G."/>
            <person name="Fletcher C.F."/>
            <person name="Fukushima T."/>
            <person name="Furuno M."/>
            <person name="Futaki S."/>
            <person name="Gariboldi M."/>
            <person name="Georgii-Hemming P."/>
            <person name="Gingeras T.R."/>
            <person name="Gojobori T."/>
            <person name="Green R.E."/>
            <person name="Gustincich S."/>
            <person name="Harbers M."/>
            <person name="Hayashi Y."/>
            <person name="Hensch T.K."/>
            <person name="Hirokawa N."/>
            <person name="Hill D."/>
            <person name="Huminiecki L."/>
            <person name="Iacono M."/>
            <person name="Ikeo K."/>
            <person name="Iwama A."/>
            <person name="Ishikawa T."/>
            <person name="Jakt M."/>
            <person name="Kanapin A."/>
            <person name="Katoh M."/>
            <person name="Kawasawa Y."/>
            <person name="Kelso J."/>
            <person name="Kitamura H."/>
            <person name="Kitano H."/>
            <person name="Kollias G."/>
            <person name="Krishnan S.P."/>
            <person name="Kruger A."/>
            <person name="Kummerfeld S.K."/>
            <person name="Kurochkin I.V."/>
            <person name="Lareau L.F."/>
            <person name="Lazarevic D."/>
            <person name="Lipovich L."/>
            <person name="Liu J."/>
            <person name="Liuni S."/>
            <person name="McWilliam S."/>
            <person name="Madan Babu M."/>
            <person name="Madera M."/>
            <person name="Marchionni L."/>
            <person name="Matsuda H."/>
            <person name="Matsuzawa S."/>
            <person name="Miki H."/>
            <person name="Mignone F."/>
            <person name="Miyake S."/>
            <person name="Morris K."/>
            <person name="Mottagui-Tabar S."/>
            <person name="Mulder N."/>
            <person name="Nakano N."/>
            <person name="Nakauchi H."/>
            <person name="Ng P."/>
            <person name="Nilsson R."/>
            <person name="Nishiguchi S."/>
            <person name="Nishikawa S."/>
            <person name="Nori F."/>
            <person name="Ohara O."/>
            <person name="Okazaki Y."/>
            <person name="Orlando V."/>
            <person name="Pang K.C."/>
            <person name="Pavan W.J."/>
            <person name="Pavesi G."/>
            <person name="Pesole G."/>
            <person name="Petrovsky N."/>
            <person name="Piazza S."/>
            <person name="Reed J."/>
            <person name="Reid J.F."/>
            <person name="Ring B.Z."/>
            <person name="Ringwald M."/>
            <person name="Rost B."/>
            <person name="Ruan Y."/>
            <person name="Salzberg S.L."/>
            <person name="Sandelin A."/>
            <person name="Schneider C."/>
            <person name="Schoenbach C."/>
            <person name="Sekiguchi K."/>
            <person name="Semple C.A."/>
            <person name="Seno S."/>
            <person name="Sessa L."/>
            <person name="Sheng Y."/>
            <person name="Shibata Y."/>
            <person name="Shimada H."/>
            <person name="Shimada K."/>
            <person name="Silva D."/>
            <person name="Sinclair B."/>
            <person name="Sperling S."/>
            <person name="Stupka E."/>
            <person name="Sugiura K."/>
            <person name="Sultana R."/>
            <person name="Takenaka Y."/>
            <person name="Taki K."/>
            <person name="Tammoja K."/>
            <person name="Tan S.L."/>
            <person name="Tang S."/>
            <person name="Taylor M.S."/>
            <person name="Tegner J."/>
            <person name="Teichmann S.A."/>
            <person name="Ueda H.R."/>
            <person name="van Nimwegen E."/>
            <person name="Verardo R."/>
            <person name="Wei C.L."/>
            <person name="Yagi K."/>
            <person name="Yamanishi H."/>
            <person name="Zabarovsky E."/>
            <person name="Zhu S."/>
            <person name="Zimmer A."/>
            <person name="Hide W."/>
            <person name="Bult C."/>
            <person name="Grimmond S.M."/>
            <person name="Teasdale R.D."/>
            <person name="Liu E.T."/>
            <person name="Brusic V."/>
            <person name="Quackenbush J."/>
            <person name="Wahlestedt C."/>
            <person name="Mattick J.S."/>
            <person name="Hume D.A."/>
            <person name="Kai C."/>
            <person name="Sasaki D."/>
            <person name="Tomaru Y."/>
            <person name="Fukuda S."/>
            <person name="Kanamori-Katayama M."/>
            <person name="Suzuki M."/>
            <person name="Aoki J."/>
            <person name="Arakawa T."/>
            <person name="Iida J."/>
            <person name="Imamura K."/>
            <person name="Itoh M."/>
            <person name="Kato T."/>
            <person name="Kawaji H."/>
            <person name="Kawagashira N."/>
            <person name="Kawashima T."/>
            <person name="Kojima M."/>
            <person name="Kondo S."/>
            <person name="Konno H."/>
            <person name="Nakano K."/>
            <person name="Ninomiya N."/>
            <person name="Nishio T."/>
            <person name="Okada M."/>
            <person name="Plessy C."/>
            <person name="Shibata K."/>
            <person name="Shiraki T."/>
            <person name="Suzuki S."/>
            <person name="Tagami M."/>
            <person name="Waki K."/>
            <person name="Watahiki A."/>
            <person name="Okamura-Oho Y."/>
            <person name="Suzuki H."/>
            <person name="Kawai J."/>
            <person name="Hayashizaki Y."/>
        </authorList>
    </citation>
    <scope>NUCLEOTIDE SEQUENCE [LARGE SCALE MRNA]</scope>
    <source>
        <strain>C57BL/6J</strain>
        <tissue>Hippocampus</tissue>
        <tissue>Kidney</tissue>
    </source>
</reference>
<reference key="3">
    <citation type="journal article" date="2004" name="Genome Res.">
        <title>The status, quality, and expansion of the NIH full-length cDNA project: the Mammalian Gene Collection (MGC).</title>
        <authorList>
            <consortium name="The MGC Project Team"/>
        </authorList>
    </citation>
    <scope>NUCLEOTIDE SEQUENCE [LARGE SCALE MRNA]</scope>
    <source>
        <strain>C57BL/6J</strain>
        <tissue>Brain</tissue>
        <tissue>Mammary gland</tissue>
    </source>
</reference>
<reference key="4">
    <citation type="journal article" date="2003" name="J. Biol. Chem.">
        <title>A single protease, Apg4B, is specific for the autophagy-related ubiquitin-like proteins GATE-16, MAP1-LC3, GABARAP, and Apg8L.</title>
        <authorList>
            <person name="Hemelaar J."/>
            <person name="Lelyveld V.S."/>
            <person name="Kessler B.M."/>
            <person name="Ploegh H.L."/>
        </authorList>
    </citation>
    <scope>CLEAVAGE BY ATG4B</scope>
    <scope>SUBCELLULAR LOCATION</scope>
</reference>
<reference key="5">
    <citation type="journal article" date="2010" name="Cell">
        <title>A tissue-specific atlas of mouse protein phosphorylation and expression.</title>
        <authorList>
            <person name="Huttlin E.L."/>
            <person name="Jedrychowski M.P."/>
            <person name="Elias J.E."/>
            <person name="Goswami T."/>
            <person name="Rad R."/>
            <person name="Beausoleil S.A."/>
            <person name="Villen J."/>
            <person name="Haas W."/>
            <person name="Sowa M.E."/>
            <person name="Gygi S.P."/>
        </authorList>
    </citation>
    <scope>IDENTIFICATION BY MASS SPECTROMETRY [LARGE SCALE ANALYSIS]</scope>
    <source>
        <tissue>Brain</tissue>
        <tissue>Heart</tissue>
        <tissue>Kidney</tissue>
        <tissue>Lung</tissue>
        <tissue>Testis</tissue>
    </source>
</reference>
<reference key="6">
    <citation type="journal article" date="2011" name="J. Cell Biol.">
        <title>OATL1, a novel autophagosome-resident Rab33B-GAP, regulates autophagosomal maturation.</title>
        <authorList>
            <person name="Itoh T."/>
            <person name="Kanno E."/>
            <person name="Uemura T."/>
            <person name="Waguri S."/>
            <person name="Fukuda M."/>
        </authorList>
    </citation>
    <scope>INTERACTION WITH TBC1D25</scope>
</reference>
<reference key="7">
    <citation type="journal article" date="2002" name="Biochem. Biophys. Res. Commun.">
        <title>Murine Apg12p has a substrate preference for murine Apg7p over three Apg8p homologs.</title>
        <authorList>
            <person name="Tanida I."/>
            <person name="Tanida-Miyake E."/>
            <person name="Nishitani T."/>
            <person name="Komatsu M."/>
            <person name="Yamazaki H."/>
            <person name="Ueno T."/>
            <person name="Kominami E."/>
        </authorList>
    </citation>
    <scope>INTERACTION WITH ATG7</scope>
</reference>
<reference key="8">
    <citation type="journal article" date="2016" name="Cell Rep.">
        <title>NCOA4 Deficiency Impairs Systemic Iron Homeostasis.</title>
        <authorList>
            <person name="Bellelli R."/>
            <person name="Federico G."/>
            <person name="Matte' A."/>
            <person name="Colecchia D."/>
            <person name="Iolascon A."/>
            <person name="Chiariello M."/>
            <person name="Santoro M."/>
            <person name="De Franceschi L."/>
            <person name="Carlomagno F."/>
        </authorList>
    </citation>
    <scope>INTERACTION WITH NCOA4</scope>
</reference>
<reference key="9">
    <citation type="journal article" date="2021" name="Cell Death Differ.">
        <title>ATG4D is the main ATG8 delipidating enzyme in mammalian cells and protects against cerebellar neurodegeneration.</title>
        <authorList>
            <person name="Tamargo-Gomez I."/>
            <person name="Martinez-Garcia G.G."/>
            <person name="Suarez M.F."/>
            <person name="Rey V."/>
            <person name="Fueyo A."/>
            <person name="Codina-Martinez H."/>
            <person name="Bretones G."/>
            <person name="Caravia X.M."/>
            <person name="Morel E."/>
            <person name="Dupont N."/>
            <person name="Cabo R."/>
            <person name="Tomas-Zapico C."/>
            <person name="Souquere S."/>
            <person name="Pierron G."/>
            <person name="Codogno P."/>
            <person name="Lopez-Otin C."/>
            <person name="Fernandez A.F."/>
            <person name="Marino G."/>
        </authorList>
    </citation>
    <scope>LIPIDATION</scope>
    <scope>DELIPIDATION</scope>
</reference>
<reference key="10">
    <citation type="journal article" date="2021" name="EMBO Rep.">
        <title>Role of FAM134 paralogues in endoplasmic reticulum remodeling, ER-phagy, and Collagen quality control.</title>
        <authorList>
            <person name="Reggio A."/>
            <person name="Buonomo V."/>
            <person name="Berkane R."/>
            <person name="Bhaskara R.M."/>
            <person name="Tellechea M."/>
            <person name="Peluso I."/>
            <person name="Polishchuk E."/>
            <person name="Di Lorenzo G."/>
            <person name="Cirillo C."/>
            <person name="Esposito M."/>
            <person name="Hussain A."/>
            <person name="Huebner A.K."/>
            <person name="Huebner C.A."/>
            <person name="Settembre C."/>
            <person name="Hummer G."/>
            <person name="Grumati P."/>
            <person name="Stolz A."/>
        </authorList>
    </citation>
    <scope>INTERACTION WITH RETREG1; RETREG2 AND RETREG3</scope>
</reference>
<protein>
    <recommendedName>
        <fullName evidence="10">Gamma-aminobutyric acid receptor-associated protein-like 2</fullName>
    </recommendedName>
    <alternativeName>
        <fullName>GABA(A) receptor-associated protein-like 2</fullName>
    </alternativeName>
    <alternativeName>
        <fullName>Golgi-associated ATPase enhancer of 16 kDa</fullName>
        <shortName>GATE-16</shortName>
    </alternativeName>
</protein>
<feature type="chain" id="PRO_0000212374" description="Gamma-aminobutyric acid receptor-associated protein-like 2">
    <location>
        <begin position="1"/>
        <end position="116"/>
    </location>
</feature>
<feature type="propeptide" id="PRO_0000423071" description="Removed in mature form" evidence="5">
    <location>
        <position position="117"/>
    </location>
</feature>
<feature type="site" description="Cleavage; by ATG4B" evidence="5">
    <location>
        <begin position="116"/>
        <end position="117"/>
    </location>
</feature>
<feature type="modified residue" description="N6-acetyllysine" evidence="2">
    <location>
        <position position="24"/>
    </location>
</feature>
<feature type="modified residue" description="Phosphoserine" evidence="2">
    <location>
        <position position="39"/>
    </location>
</feature>
<feature type="modified residue" description="Phosphoserine" evidence="2">
    <location>
        <position position="87"/>
    </location>
</feature>
<feature type="modified residue" description="Phosphoserine" evidence="2">
    <location>
        <position position="88"/>
    </location>
</feature>
<feature type="lipid moiety-binding region" description="Phosphatidylethanolamine amidated glycine; alternate" evidence="2">
    <location>
        <position position="116"/>
    </location>
</feature>
<feature type="lipid moiety-binding region" description="Phosphatidylserine amidated glycine; alternate" evidence="2">
    <location>
        <position position="116"/>
    </location>
</feature>
<feature type="sequence conflict" description="In Ref. 2; BAB22217." evidence="10" ref="2">
    <original>T</original>
    <variation>A</variation>
    <location>
        <position position="83"/>
    </location>
</feature>
<name>GBRL2_MOUSE</name>
<comment type="function">
    <text evidence="1 2">Ubiquitin-like modifier involved in intra-Golgi traffic. Modulates intra-Golgi transport through coupling between NSF activity and SNAREs activation. It first stimulates the ATPase activity of NSF which in turn stimulates the association with GOSR1 (By similarity). Involved in autophagy. Plays a role in mitophagy which contributes to regulate mitochondrial quantity and quality by eliminating the mitochondria to a basal level to fulfill cellular energy requirements and preventing excess ROS production. Whereas LC3s are involved in elongation of the phagophore membrane, the GABARAP/GATE-16 subfamily is essential for a later stage in autophagosome maturation (By similarity).</text>
</comment>
<comment type="subunit">
    <text evidence="1 2 4 6 7 9">Monomer (By similarity). Interacts with ATG3, ATG13 and ULK1 (By similarity). Interacts with ATG7 (PubMed:11890701). Interacts with TP53INP1 and TP53INP2 (By similarity). Interacts with TBC1D25 (PubMed:21383079). Directly interacts with SQSTM1 and BNIP3 (By similarity). Interacts with TECPR2 and PCM1 (By similarity). Interacts with TBC1D5 (By similarity). Interacts with TRIM5 (By similarity). Interacts with MEFV and TRIM21 (By similarity). Interacts with WDFY3 (By similarity). Interacts with UBA5; promoting recruitment of UBA5 to the endoplasmic reticulum membrane (By similarity). Interacts with GOSR1 (By similarity). Interacts with KBTBD6 and KBTBD7; the interaction is direct (By similarity). Interacts with reticulophagy regulators RETREG1, RETREG2 and RETREG3 (PubMed:34338405). Interacts with Irgm1 (By similarity). Interacts with DNM2 (By similarity). Interacts with NCOA4 (PubMed:26776506). Interacts with IRGQ (By similarity).</text>
</comment>
<comment type="subcellular location">
    <subcellularLocation>
        <location evidence="5">Cytoplasmic vesicle</location>
        <location evidence="5">Autophagosome</location>
    </subcellularLocation>
    <subcellularLocation>
        <location evidence="2">Endoplasmic reticulum membrane</location>
    </subcellularLocation>
    <subcellularLocation>
        <location evidence="1">Golgi apparatus</location>
    </subcellularLocation>
</comment>
<comment type="tissue specificity">
    <text evidence="3">Ubiquitous. A high level expression is seen in brain, thymus, lung, heart, liver and kidney.</text>
</comment>
<comment type="PTM">
    <text evidence="2 5 8">The precursor molecule is cleaved by ATG4 (ATG4A, ATG4B, ATG4C or ATG4D) to expose the glycine at the C-terminus and form the cytosolic form, GABARAPL2-I (PubMed:14530254). The processed form is then activated by APG7L/ATG7, transferred to ATG3 and conjugated to phosphatidylethanolamine (PE) phospholipid to form the membrane-bound form, GABARAPL2-II (By similarity). During non-canonical autophagy, the processed form is conjugated to phosphatidylserine (PS) phospholipid (By similarity). ATG4 proteins also mediate the delipidation of PE-conjugated forms required for GABARAPL2 recycling when autophagosomes fuse with lysosomes (PubMed:33795848). In addition, ATG4B and ATG4D mediate delipidation of ATG8 proteins conjugated to PS during non-canonical autophagy (By similarity). ATG4B constitutes the major protein for proteolytic activation (By similarity). ATG4D is the main enzyme for delipidation activity (PubMed:33795848).</text>
</comment>
<comment type="PTM">
    <text evidence="2">Phosphorylation at Ser-87 and Ser-88 by TBK1 prevents interaction with ATG4 (ATG4A, ATG4B, ATG4C or ATG4D). Phosphorylation by TBK1 on autophagosomes prevents their delipidation by ATG4 and premature removal from nascent autophagosomes.</text>
</comment>
<comment type="similarity">
    <text evidence="10">Belongs to the ATG8 family.</text>
</comment>
<keyword id="KW-0007">Acetylation</keyword>
<keyword id="KW-0072">Autophagy</keyword>
<keyword id="KW-0968">Cytoplasmic vesicle</keyword>
<keyword id="KW-0256">Endoplasmic reticulum</keyword>
<keyword id="KW-0333">Golgi apparatus</keyword>
<keyword id="KW-0449">Lipoprotein</keyword>
<keyword id="KW-0472">Membrane</keyword>
<keyword id="KW-0597">Phosphoprotein</keyword>
<keyword id="KW-0653">Protein transport</keyword>
<keyword id="KW-1185">Reference proteome</keyword>
<keyword id="KW-0813">Transport</keyword>
<gene>
    <name evidence="11" type="primary">Gabarapl2</name>
</gene>
<organism>
    <name type="scientific">Mus musculus</name>
    <name type="common">Mouse</name>
    <dbReference type="NCBI Taxonomy" id="10090"/>
    <lineage>
        <taxon>Eukaryota</taxon>
        <taxon>Metazoa</taxon>
        <taxon>Chordata</taxon>
        <taxon>Craniata</taxon>
        <taxon>Vertebrata</taxon>
        <taxon>Euteleostomi</taxon>
        <taxon>Mammalia</taxon>
        <taxon>Eutheria</taxon>
        <taxon>Euarchontoglires</taxon>
        <taxon>Glires</taxon>
        <taxon>Rodentia</taxon>
        <taxon>Myomorpha</taxon>
        <taxon>Muroidea</taxon>
        <taxon>Muridae</taxon>
        <taxon>Murinae</taxon>
        <taxon>Mus</taxon>
        <taxon>Mus</taxon>
    </lineage>
</organism>
<sequence length="117" mass="13667">MKWMFKEDHSLEHRCVESAKIRAKYPDRVPVIVEKVSGSQIVDIDKRKYLVPSDITVAQFMWIIRKRIQLPSEKAIFLFVDKTVPQSSLTMGQLYEKEKDEDGFLYVAYSGENTFGF</sequence>
<proteinExistence type="evidence at protein level"/>